<organism>
    <name type="scientific">Aspergillus oryzae (strain ATCC 42149 / RIB 40)</name>
    <name type="common">Yellow koji mold</name>
    <dbReference type="NCBI Taxonomy" id="510516"/>
    <lineage>
        <taxon>Eukaryota</taxon>
        <taxon>Fungi</taxon>
        <taxon>Dikarya</taxon>
        <taxon>Ascomycota</taxon>
        <taxon>Pezizomycotina</taxon>
        <taxon>Eurotiomycetes</taxon>
        <taxon>Eurotiomycetidae</taxon>
        <taxon>Eurotiales</taxon>
        <taxon>Aspergillaceae</taxon>
        <taxon>Aspergillus</taxon>
        <taxon>Aspergillus subgen. Circumdati</taxon>
    </lineage>
</organism>
<sequence>MTAPALSARGAYRQILRATRIAFHEDTRVLLAARQEARRQFDEHKRVGIDTPMQINHAIEVASILKHNIVQGVKPEGDEAAKWELRIHDDIERGDNDSIKHAGKDIKIHKACSA</sequence>
<feature type="transit peptide" description="Mitochondrion" evidence="2">
    <location>
        <begin position="1"/>
        <end position="18"/>
    </location>
</feature>
<feature type="chain" id="PRO_0000405485" description="Mitochondrial zinc maintenance protein 1, mitochondrial">
    <location>
        <begin position="19"/>
        <end position="114"/>
    </location>
</feature>
<protein>
    <recommendedName>
        <fullName>Mitochondrial zinc maintenance protein 1, mitochondrial</fullName>
    </recommendedName>
</protein>
<evidence type="ECO:0000250" key="1"/>
<evidence type="ECO:0000255" key="2"/>
<evidence type="ECO:0000305" key="3"/>
<proteinExistence type="inferred from homology"/>
<accession>Q2U0V4</accession>
<name>MZM1_ASPOR</name>
<gene>
    <name type="primary">MZM1</name>
    <name type="ORF">AO090011000291</name>
</gene>
<reference key="1">
    <citation type="journal article" date="2005" name="Nature">
        <title>Genome sequencing and analysis of Aspergillus oryzae.</title>
        <authorList>
            <person name="Machida M."/>
            <person name="Asai K."/>
            <person name="Sano M."/>
            <person name="Tanaka T."/>
            <person name="Kumagai T."/>
            <person name="Terai G."/>
            <person name="Kusumoto K."/>
            <person name="Arima T."/>
            <person name="Akita O."/>
            <person name="Kashiwagi Y."/>
            <person name="Abe K."/>
            <person name="Gomi K."/>
            <person name="Horiuchi H."/>
            <person name="Kitamoto K."/>
            <person name="Kobayashi T."/>
            <person name="Takeuchi M."/>
            <person name="Denning D.W."/>
            <person name="Galagan J.E."/>
            <person name="Nierman W.C."/>
            <person name="Yu J."/>
            <person name="Archer D.B."/>
            <person name="Bennett J.W."/>
            <person name="Bhatnagar D."/>
            <person name="Cleveland T.E."/>
            <person name="Fedorova N.D."/>
            <person name="Gotoh O."/>
            <person name="Horikawa H."/>
            <person name="Hosoyama A."/>
            <person name="Ichinomiya M."/>
            <person name="Igarashi R."/>
            <person name="Iwashita K."/>
            <person name="Juvvadi P.R."/>
            <person name="Kato M."/>
            <person name="Kato Y."/>
            <person name="Kin T."/>
            <person name="Kokubun A."/>
            <person name="Maeda H."/>
            <person name="Maeyama N."/>
            <person name="Maruyama J."/>
            <person name="Nagasaki H."/>
            <person name="Nakajima T."/>
            <person name="Oda K."/>
            <person name="Okada K."/>
            <person name="Paulsen I."/>
            <person name="Sakamoto K."/>
            <person name="Sawano T."/>
            <person name="Takahashi M."/>
            <person name="Takase K."/>
            <person name="Terabayashi Y."/>
            <person name="Wortman J.R."/>
            <person name="Yamada O."/>
            <person name="Yamagata Y."/>
            <person name="Anazawa H."/>
            <person name="Hata Y."/>
            <person name="Koide Y."/>
            <person name="Komori T."/>
            <person name="Koyama Y."/>
            <person name="Minetoki T."/>
            <person name="Suharnan S."/>
            <person name="Tanaka A."/>
            <person name="Isono K."/>
            <person name="Kuhara S."/>
            <person name="Ogasawara N."/>
            <person name="Kikuchi H."/>
        </authorList>
    </citation>
    <scope>NUCLEOTIDE SEQUENCE [LARGE SCALE GENOMIC DNA]</scope>
    <source>
        <strain>ATCC 42149 / RIB 40</strain>
    </source>
</reference>
<comment type="function">
    <text evidence="1">Assembly factor required for Rieske Fe-S protein RIP1 incorporation into the cytochrome b-c1 (CIII) complex. Functions as a chaperone, binding to this subunit within the mitochondrial matrix and stabilizing it prior to its translocation and insertion into the late CIII dimeric intermediate within the mitochondrial inner membrane. Modulates the mitochondrial matrix zinc pool (By similarity).</text>
</comment>
<comment type="subunit">
    <text evidence="1">Interacts with RIP1.</text>
</comment>
<comment type="subcellular location">
    <subcellularLocation>
        <location evidence="1">Mitochondrion matrix</location>
    </subcellularLocation>
</comment>
<comment type="similarity">
    <text evidence="3">Belongs to the complex I LYR family. MZM1 subfamily.</text>
</comment>
<keyword id="KW-0143">Chaperone</keyword>
<keyword id="KW-0496">Mitochondrion</keyword>
<keyword id="KW-1185">Reference proteome</keyword>
<keyword id="KW-0809">Transit peptide</keyword>
<dbReference type="EMBL" id="BA000055">
    <property type="protein sequence ID" value="BAE64811.1"/>
    <property type="molecule type" value="Genomic_DNA"/>
</dbReference>
<dbReference type="RefSeq" id="XP_001825944.1">
    <property type="nucleotide sequence ID" value="XM_001825892.2"/>
</dbReference>
<dbReference type="SMR" id="Q2U0V4"/>
<dbReference type="STRING" id="510516.Q2U0V4"/>
<dbReference type="EnsemblFungi" id="BAE64811">
    <property type="protein sequence ID" value="BAE64811"/>
    <property type="gene ID" value="AO090011000291"/>
</dbReference>
<dbReference type="GeneID" id="5998047"/>
<dbReference type="KEGG" id="aor:AO090011000291"/>
<dbReference type="VEuPathDB" id="FungiDB:AO090011000291"/>
<dbReference type="HOGENOM" id="CLU_147114_2_0_1"/>
<dbReference type="OMA" id="KYKLRIH"/>
<dbReference type="OrthoDB" id="27251at5052"/>
<dbReference type="Proteomes" id="UP000006564">
    <property type="component" value="Chromosome 7"/>
</dbReference>
<dbReference type="GO" id="GO:0005759">
    <property type="term" value="C:mitochondrial matrix"/>
    <property type="evidence" value="ECO:0007669"/>
    <property type="project" value="UniProtKB-SubCell"/>
</dbReference>
<dbReference type="GO" id="GO:0044183">
    <property type="term" value="F:protein folding chaperone"/>
    <property type="evidence" value="ECO:0007669"/>
    <property type="project" value="TreeGrafter"/>
</dbReference>
<dbReference type="GO" id="GO:0034551">
    <property type="term" value="P:mitochondrial respiratory chain complex III assembly"/>
    <property type="evidence" value="ECO:0007669"/>
    <property type="project" value="InterPro"/>
</dbReference>
<dbReference type="CDD" id="cd20267">
    <property type="entry name" value="Complex1_LYR_LYRM7"/>
    <property type="match status" value="1"/>
</dbReference>
<dbReference type="InterPro" id="IPR045298">
    <property type="entry name" value="Complex1_LYR_LYRM7"/>
</dbReference>
<dbReference type="InterPro" id="IPR050435">
    <property type="entry name" value="MZM1/LYRM7"/>
</dbReference>
<dbReference type="PANTHER" id="PTHR46749">
    <property type="entry name" value="COMPLEX III ASSEMBLY FACTOR LYRM7"/>
    <property type="match status" value="1"/>
</dbReference>
<dbReference type="PANTHER" id="PTHR46749:SF1">
    <property type="entry name" value="COMPLEX III ASSEMBLY FACTOR LYRM7"/>
    <property type="match status" value="1"/>
</dbReference>